<name>Y793_METM6</name>
<feature type="chain" id="PRO_1000090213" description="DNA-binding protein MmarC6_0793">
    <location>
        <begin position="1"/>
        <end position="118"/>
    </location>
</feature>
<feature type="region of interest" description="Disordered" evidence="2">
    <location>
        <begin position="1"/>
        <end position="33"/>
    </location>
</feature>
<feature type="compositionally biased region" description="Basic and acidic residues" evidence="2">
    <location>
        <begin position="1"/>
        <end position="12"/>
    </location>
</feature>
<feature type="compositionally biased region" description="Low complexity" evidence="2">
    <location>
        <begin position="24"/>
        <end position="33"/>
    </location>
</feature>
<proteinExistence type="inferred from homology"/>
<accession>A9A8D7</accession>
<dbReference type="EMBL" id="CP000867">
    <property type="protein sequence ID" value="ABX01610.1"/>
    <property type="molecule type" value="Genomic_DNA"/>
</dbReference>
<dbReference type="SMR" id="A9A8D7"/>
<dbReference type="STRING" id="444158.MmarC6_0793"/>
<dbReference type="KEGG" id="mmx:MmarC6_0793"/>
<dbReference type="eggNOG" id="arCOG04179">
    <property type="taxonomic scope" value="Archaea"/>
</dbReference>
<dbReference type="HOGENOM" id="CLU_122978_3_0_2"/>
<dbReference type="OrthoDB" id="7912at2157"/>
<dbReference type="PhylomeDB" id="A9A8D7"/>
<dbReference type="GO" id="GO:0005829">
    <property type="term" value="C:cytosol"/>
    <property type="evidence" value="ECO:0007669"/>
    <property type="project" value="TreeGrafter"/>
</dbReference>
<dbReference type="GO" id="GO:0003677">
    <property type="term" value="F:DNA binding"/>
    <property type="evidence" value="ECO:0007669"/>
    <property type="project" value="UniProtKB-UniRule"/>
</dbReference>
<dbReference type="Gene3D" id="1.10.8.140">
    <property type="entry name" value="PDCD5-like"/>
    <property type="match status" value="1"/>
</dbReference>
<dbReference type="HAMAP" id="MF_00026">
    <property type="entry name" value="dsDNA_bind"/>
    <property type="match status" value="1"/>
</dbReference>
<dbReference type="InterPro" id="IPR022889">
    <property type="entry name" value="DNA_bind_arc"/>
</dbReference>
<dbReference type="InterPro" id="IPR002836">
    <property type="entry name" value="PDCD5-like"/>
</dbReference>
<dbReference type="InterPro" id="IPR036883">
    <property type="entry name" value="PDCD5-like_sf"/>
</dbReference>
<dbReference type="NCBIfam" id="NF003268">
    <property type="entry name" value="PRK04239.1"/>
    <property type="match status" value="1"/>
</dbReference>
<dbReference type="PANTHER" id="PTHR10840">
    <property type="entry name" value="PROGRAMMED CELL DEATH PROTEIN 5"/>
    <property type="match status" value="1"/>
</dbReference>
<dbReference type="PANTHER" id="PTHR10840:SF0">
    <property type="entry name" value="PROGRAMMED CELL DEATH PROTEIN 5"/>
    <property type="match status" value="1"/>
</dbReference>
<dbReference type="Pfam" id="PF01984">
    <property type="entry name" value="dsDNA_bind"/>
    <property type="match status" value="1"/>
</dbReference>
<dbReference type="PIRSF" id="PIRSF015730">
    <property type="entry name" value="TFAR19"/>
    <property type="match status" value="1"/>
</dbReference>
<dbReference type="SUPFAM" id="SSF46950">
    <property type="entry name" value="Double-stranded DNA-binding domain"/>
    <property type="match status" value="1"/>
</dbReference>
<evidence type="ECO:0000255" key="1">
    <source>
        <dbReference type="HAMAP-Rule" id="MF_00026"/>
    </source>
</evidence>
<evidence type="ECO:0000256" key="2">
    <source>
        <dbReference type="SAM" id="MobiDB-lite"/>
    </source>
</evidence>
<organism>
    <name type="scientific">Methanococcus maripaludis (strain C6 / ATCC BAA-1332)</name>
    <dbReference type="NCBI Taxonomy" id="444158"/>
    <lineage>
        <taxon>Archaea</taxon>
        <taxon>Methanobacteriati</taxon>
        <taxon>Methanobacteriota</taxon>
        <taxon>Methanomada group</taxon>
        <taxon>Methanococci</taxon>
        <taxon>Methanococcales</taxon>
        <taxon>Methanococcaceae</taxon>
        <taxon>Methanococcus</taxon>
    </lineage>
</organism>
<sequence>MNPEEIRQRRLQEMQAKAQEQGAQDPEAQRQMQEQQMQYEMQKQKILRQILSEEARSRLARIKLAKPQFAEQVEMQLIQLAQAGKLPIPLTDEYFKGLLDRIYEMNKPAKKEITIMRR</sequence>
<protein>
    <recommendedName>
        <fullName evidence="1">DNA-binding protein MmarC6_0793</fullName>
    </recommendedName>
</protein>
<gene>
    <name type="ordered locus">MmarC6_0793</name>
</gene>
<keyword id="KW-0238">DNA-binding</keyword>
<comment type="similarity">
    <text evidence="1">Belongs to the PDCD5 family.</text>
</comment>
<reference key="1">
    <citation type="submission" date="2007-10" db="EMBL/GenBank/DDBJ databases">
        <title>Complete sequence of Methanococcus maripaludis C6.</title>
        <authorList>
            <consortium name="US DOE Joint Genome Institute"/>
            <person name="Copeland A."/>
            <person name="Lucas S."/>
            <person name="Lapidus A."/>
            <person name="Barry K."/>
            <person name="Glavina del Rio T."/>
            <person name="Dalin E."/>
            <person name="Tice H."/>
            <person name="Pitluck S."/>
            <person name="Clum A."/>
            <person name="Schmutz J."/>
            <person name="Larimer F."/>
            <person name="Land M."/>
            <person name="Hauser L."/>
            <person name="Kyrpides N."/>
            <person name="Mikhailova N."/>
            <person name="Sieprawska-Lupa M."/>
            <person name="Whitman W.B."/>
            <person name="Richardson P."/>
        </authorList>
    </citation>
    <scope>NUCLEOTIDE SEQUENCE [LARGE SCALE GENOMIC DNA]</scope>
    <source>
        <strain>C6 / ATCC BAA-1332</strain>
    </source>
</reference>